<feature type="chain" id="PRO_1000195955" description="Large ribosomal subunit protein bL32">
    <location>
        <begin position="1"/>
        <end position="67"/>
    </location>
</feature>
<feature type="region of interest" description="Disordered" evidence="2">
    <location>
        <begin position="1"/>
        <end position="21"/>
    </location>
</feature>
<feature type="compositionally biased region" description="Basic residues" evidence="2">
    <location>
        <begin position="1"/>
        <end position="19"/>
    </location>
</feature>
<comment type="similarity">
    <text evidence="1">Belongs to the bacterial ribosomal protein bL32 family.</text>
</comment>
<protein>
    <recommendedName>
        <fullName evidence="1">Large ribosomal subunit protein bL32</fullName>
    </recommendedName>
    <alternativeName>
        <fullName evidence="3">50S ribosomal protein L32</fullName>
    </alternativeName>
</protein>
<accession>B8HAB3</accession>
<dbReference type="EMBL" id="CP001341">
    <property type="protein sequence ID" value="ACL40205.1"/>
    <property type="molecule type" value="Genomic_DNA"/>
</dbReference>
<dbReference type="RefSeq" id="WP_009356569.1">
    <property type="nucleotide sequence ID" value="NC_011886.1"/>
</dbReference>
<dbReference type="SMR" id="B8HAB3"/>
<dbReference type="STRING" id="452863.Achl_2240"/>
<dbReference type="GeneID" id="97423990"/>
<dbReference type="KEGG" id="ach:Achl_2240"/>
<dbReference type="eggNOG" id="COG0333">
    <property type="taxonomic scope" value="Bacteria"/>
</dbReference>
<dbReference type="HOGENOM" id="CLU_2805252_0_0_11"/>
<dbReference type="OrthoDB" id="9807363at2"/>
<dbReference type="Proteomes" id="UP000002505">
    <property type="component" value="Chromosome"/>
</dbReference>
<dbReference type="GO" id="GO:0015934">
    <property type="term" value="C:large ribosomal subunit"/>
    <property type="evidence" value="ECO:0007669"/>
    <property type="project" value="InterPro"/>
</dbReference>
<dbReference type="GO" id="GO:0003735">
    <property type="term" value="F:structural constituent of ribosome"/>
    <property type="evidence" value="ECO:0007669"/>
    <property type="project" value="InterPro"/>
</dbReference>
<dbReference type="GO" id="GO:0006412">
    <property type="term" value="P:translation"/>
    <property type="evidence" value="ECO:0007669"/>
    <property type="project" value="UniProtKB-UniRule"/>
</dbReference>
<dbReference type="HAMAP" id="MF_00340">
    <property type="entry name" value="Ribosomal_bL32"/>
    <property type="match status" value="1"/>
</dbReference>
<dbReference type="InterPro" id="IPR002677">
    <property type="entry name" value="Ribosomal_bL32"/>
</dbReference>
<dbReference type="InterPro" id="IPR011332">
    <property type="entry name" value="Ribosomal_zn-bd"/>
</dbReference>
<dbReference type="NCBIfam" id="TIGR01031">
    <property type="entry name" value="rpmF_bact"/>
    <property type="match status" value="1"/>
</dbReference>
<dbReference type="Pfam" id="PF01783">
    <property type="entry name" value="Ribosomal_L32p"/>
    <property type="match status" value="1"/>
</dbReference>
<dbReference type="SUPFAM" id="SSF57829">
    <property type="entry name" value="Zn-binding ribosomal proteins"/>
    <property type="match status" value="1"/>
</dbReference>
<reference key="1">
    <citation type="submission" date="2009-01" db="EMBL/GenBank/DDBJ databases">
        <title>Complete sequence of chromosome of Arthrobacter chlorophenolicus A6.</title>
        <authorList>
            <consortium name="US DOE Joint Genome Institute"/>
            <person name="Lucas S."/>
            <person name="Copeland A."/>
            <person name="Lapidus A."/>
            <person name="Glavina del Rio T."/>
            <person name="Tice H."/>
            <person name="Bruce D."/>
            <person name="Goodwin L."/>
            <person name="Pitluck S."/>
            <person name="Goltsman E."/>
            <person name="Clum A."/>
            <person name="Larimer F."/>
            <person name="Land M."/>
            <person name="Hauser L."/>
            <person name="Kyrpides N."/>
            <person name="Mikhailova N."/>
            <person name="Jansson J."/>
            <person name="Richardson P."/>
        </authorList>
    </citation>
    <scope>NUCLEOTIDE SEQUENCE [LARGE SCALE GENOMIC DNA]</scope>
    <source>
        <strain>ATCC 700700 / DSM 12829 / CIP 107037 / JCM 12360 / KCTC 9906 / NCIMB 13794 / A6</strain>
    </source>
</reference>
<sequence length="67" mass="7469">MAVPKRKMSRSNTRARRSQWKATAPHLVKTVENGQVTYSLPHQAKVVTDSAGTALFLEYKGRKVADV</sequence>
<gene>
    <name evidence="1" type="primary">rpmF</name>
    <name type="ordered locus">Achl_2240</name>
</gene>
<keyword id="KW-0687">Ribonucleoprotein</keyword>
<keyword id="KW-0689">Ribosomal protein</keyword>
<name>RL32_PSECP</name>
<evidence type="ECO:0000255" key="1">
    <source>
        <dbReference type="HAMAP-Rule" id="MF_00340"/>
    </source>
</evidence>
<evidence type="ECO:0000256" key="2">
    <source>
        <dbReference type="SAM" id="MobiDB-lite"/>
    </source>
</evidence>
<evidence type="ECO:0000305" key="3"/>
<organism>
    <name type="scientific">Pseudarthrobacter chlorophenolicus (strain ATCC 700700 / DSM 12829 / CIP 107037 / JCM 12360 / KCTC 9906 / NCIMB 13794 / A6)</name>
    <name type="common">Arthrobacter chlorophenolicus</name>
    <dbReference type="NCBI Taxonomy" id="452863"/>
    <lineage>
        <taxon>Bacteria</taxon>
        <taxon>Bacillati</taxon>
        <taxon>Actinomycetota</taxon>
        <taxon>Actinomycetes</taxon>
        <taxon>Micrococcales</taxon>
        <taxon>Micrococcaceae</taxon>
        <taxon>Pseudarthrobacter</taxon>
    </lineage>
</organism>
<proteinExistence type="inferred from homology"/>